<proteinExistence type="inferred from homology"/>
<evidence type="ECO:0000255" key="1">
    <source>
        <dbReference type="HAMAP-Rule" id="MF_00104"/>
    </source>
</evidence>
<protein>
    <recommendedName>
        <fullName evidence="1">Ribonuclease 3</fullName>
        <ecNumber evidence="1">3.1.26.3</ecNumber>
    </recommendedName>
    <alternativeName>
        <fullName evidence="1">Ribonuclease III</fullName>
        <shortName evidence="1">RNase III</shortName>
    </alternativeName>
</protein>
<keyword id="KW-0963">Cytoplasm</keyword>
<keyword id="KW-0255">Endonuclease</keyword>
<keyword id="KW-0378">Hydrolase</keyword>
<keyword id="KW-0460">Magnesium</keyword>
<keyword id="KW-0479">Metal-binding</keyword>
<keyword id="KW-0507">mRNA processing</keyword>
<keyword id="KW-0540">Nuclease</keyword>
<keyword id="KW-0694">RNA-binding</keyword>
<keyword id="KW-0698">rRNA processing</keyword>
<keyword id="KW-0699">rRNA-binding</keyword>
<keyword id="KW-0819">tRNA processing</keyword>
<organism>
    <name type="scientific">Coxiella burnetii (strain CbuK_Q154)</name>
    <name type="common">Coxiella burnetii (strain Q154)</name>
    <dbReference type="NCBI Taxonomy" id="434924"/>
    <lineage>
        <taxon>Bacteria</taxon>
        <taxon>Pseudomonadati</taxon>
        <taxon>Pseudomonadota</taxon>
        <taxon>Gammaproteobacteria</taxon>
        <taxon>Legionellales</taxon>
        <taxon>Coxiellaceae</taxon>
        <taxon>Coxiella</taxon>
    </lineage>
</organism>
<accession>B6J4J9</accession>
<name>RNC_COXB1</name>
<reference key="1">
    <citation type="journal article" date="2009" name="Infect. Immun.">
        <title>Comparative genomics reveal extensive transposon-mediated genomic plasticity and diversity among potential effector proteins within the genus Coxiella.</title>
        <authorList>
            <person name="Beare P.A."/>
            <person name="Unsworth N."/>
            <person name="Andoh M."/>
            <person name="Voth D.E."/>
            <person name="Omsland A."/>
            <person name="Gilk S.D."/>
            <person name="Williams K.P."/>
            <person name="Sobral B.W."/>
            <person name="Kupko J.J. III"/>
            <person name="Porcella S.F."/>
            <person name="Samuel J.E."/>
            <person name="Heinzen R.A."/>
        </authorList>
    </citation>
    <scope>NUCLEOTIDE SEQUENCE [LARGE SCALE GENOMIC DNA]</scope>
    <source>
        <strain>CbuK_Q154</strain>
    </source>
</reference>
<gene>
    <name evidence="1" type="primary">rnc</name>
    <name type="ordered locus">CbuK_1731</name>
</gene>
<feature type="chain" id="PRO_1000094103" description="Ribonuclease 3">
    <location>
        <begin position="1"/>
        <end position="233"/>
    </location>
</feature>
<feature type="domain" description="RNase III" evidence="1">
    <location>
        <begin position="4"/>
        <end position="126"/>
    </location>
</feature>
<feature type="domain" description="DRBM" evidence="1">
    <location>
        <begin position="153"/>
        <end position="222"/>
    </location>
</feature>
<feature type="active site" evidence="1">
    <location>
        <position position="43"/>
    </location>
</feature>
<feature type="active site" evidence="1">
    <location>
        <position position="115"/>
    </location>
</feature>
<feature type="binding site" evidence="1">
    <location>
        <position position="39"/>
    </location>
    <ligand>
        <name>Mg(2+)</name>
        <dbReference type="ChEBI" id="CHEBI:18420"/>
    </ligand>
</feature>
<feature type="binding site" evidence="1">
    <location>
        <position position="112"/>
    </location>
    <ligand>
        <name>Mg(2+)</name>
        <dbReference type="ChEBI" id="CHEBI:18420"/>
    </ligand>
</feature>
<feature type="binding site" evidence="1">
    <location>
        <position position="115"/>
    </location>
    <ligand>
        <name>Mg(2+)</name>
        <dbReference type="ChEBI" id="CHEBI:18420"/>
    </ligand>
</feature>
<dbReference type="EC" id="3.1.26.3" evidence="1"/>
<dbReference type="EMBL" id="CP001020">
    <property type="protein sequence ID" value="ACJ20864.1"/>
    <property type="molecule type" value="Genomic_DNA"/>
</dbReference>
<dbReference type="RefSeq" id="WP_005772034.1">
    <property type="nucleotide sequence ID" value="NC_011528.1"/>
</dbReference>
<dbReference type="SMR" id="B6J4J9"/>
<dbReference type="KEGG" id="cbc:CbuK_1731"/>
<dbReference type="HOGENOM" id="CLU_000907_1_1_6"/>
<dbReference type="GO" id="GO:0005737">
    <property type="term" value="C:cytoplasm"/>
    <property type="evidence" value="ECO:0007669"/>
    <property type="project" value="UniProtKB-SubCell"/>
</dbReference>
<dbReference type="GO" id="GO:0003725">
    <property type="term" value="F:double-stranded RNA binding"/>
    <property type="evidence" value="ECO:0007669"/>
    <property type="project" value="TreeGrafter"/>
</dbReference>
<dbReference type="GO" id="GO:0046872">
    <property type="term" value="F:metal ion binding"/>
    <property type="evidence" value="ECO:0007669"/>
    <property type="project" value="UniProtKB-KW"/>
</dbReference>
<dbReference type="GO" id="GO:0004525">
    <property type="term" value="F:ribonuclease III activity"/>
    <property type="evidence" value="ECO:0007669"/>
    <property type="project" value="UniProtKB-UniRule"/>
</dbReference>
<dbReference type="GO" id="GO:0019843">
    <property type="term" value="F:rRNA binding"/>
    <property type="evidence" value="ECO:0007669"/>
    <property type="project" value="UniProtKB-KW"/>
</dbReference>
<dbReference type="GO" id="GO:0006397">
    <property type="term" value="P:mRNA processing"/>
    <property type="evidence" value="ECO:0007669"/>
    <property type="project" value="UniProtKB-UniRule"/>
</dbReference>
<dbReference type="GO" id="GO:0010468">
    <property type="term" value="P:regulation of gene expression"/>
    <property type="evidence" value="ECO:0007669"/>
    <property type="project" value="TreeGrafter"/>
</dbReference>
<dbReference type="GO" id="GO:0006364">
    <property type="term" value="P:rRNA processing"/>
    <property type="evidence" value="ECO:0007669"/>
    <property type="project" value="UniProtKB-UniRule"/>
</dbReference>
<dbReference type="GO" id="GO:0008033">
    <property type="term" value="P:tRNA processing"/>
    <property type="evidence" value="ECO:0007669"/>
    <property type="project" value="UniProtKB-KW"/>
</dbReference>
<dbReference type="CDD" id="cd10845">
    <property type="entry name" value="DSRM_RNAse_III_family"/>
    <property type="match status" value="1"/>
</dbReference>
<dbReference type="CDD" id="cd00593">
    <property type="entry name" value="RIBOc"/>
    <property type="match status" value="1"/>
</dbReference>
<dbReference type="FunFam" id="1.10.1520.10:FF:000001">
    <property type="entry name" value="Ribonuclease 3"/>
    <property type="match status" value="1"/>
</dbReference>
<dbReference type="FunFam" id="3.30.160.20:FF:000003">
    <property type="entry name" value="Ribonuclease 3"/>
    <property type="match status" value="1"/>
</dbReference>
<dbReference type="Gene3D" id="3.30.160.20">
    <property type="match status" value="1"/>
</dbReference>
<dbReference type="Gene3D" id="1.10.1520.10">
    <property type="entry name" value="Ribonuclease III domain"/>
    <property type="match status" value="1"/>
</dbReference>
<dbReference type="HAMAP" id="MF_00104">
    <property type="entry name" value="RNase_III"/>
    <property type="match status" value="1"/>
</dbReference>
<dbReference type="InterPro" id="IPR014720">
    <property type="entry name" value="dsRBD_dom"/>
</dbReference>
<dbReference type="InterPro" id="IPR011907">
    <property type="entry name" value="RNase_III"/>
</dbReference>
<dbReference type="InterPro" id="IPR000999">
    <property type="entry name" value="RNase_III_dom"/>
</dbReference>
<dbReference type="InterPro" id="IPR036389">
    <property type="entry name" value="RNase_III_sf"/>
</dbReference>
<dbReference type="NCBIfam" id="TIGR02191">
    <property type="entry name" value="RNaseIII"/>
    <property type="match status" value="1"/>
</dbReference>
<dbReference type="PANTHER" id="PTHR11207:SF0">
    <property type="entry name" value="RIBONUCLEASE 3"/>
    <property type="match status" value="1"/>
</dbReference>
<dbReference type="PANTHER" id="PTHR11207">
    <property type="entry name" value="RIBONUCLEASE III"/>
    <property type="match status" value="1"/>
</dbReference>
<dbReference type="Pfam" id="PF00035">
    <property type="entry name" value="dsrm"/>
    <property type="match status" value="1"/>
</dbReference>
<dbReference type="Pfam" id="PF14622">
    <property type="entry name" value="Ribonucleas_3_3"/>
    <property type="match status" value="1"/>
</dbReference>
<dbReference type="SMART" id="SM00358">
    <property type="entry name" value="DSRM"/>
    <property type="match status" value="1"/>
</dbReference>
<dbReference type="SMART" id="SM00535">
    <property type="entry name" value="RIBOc"/>
    <property type="match status" value="1"/>
</dbReference>
<dbReference type="SUPFAM" id="SSF54768">
    <property type="entry name" value="dsRNA-binding domain-like"/>
    <property type="match status" value="1"/>
</dbReference>
<dbReference type="SUPFAM" id="SSF69065">
    <property type="entry name" value="RNase III domain-like"/>
    <property type="match status" value="1"/>
</dbReference>
<dbReference type="PROSITE" id="PS50137">
    <property type="entry name" value="DS_RBD"/>
    <property type="match status" value="1"/>
</dbReference>
<dbReference type="PROSITE" id="PS00517">
    <property type="entry name" value="RNASE_3_1"/>
    <property type="match status" value="1"/>
</dbReference>
<dbReference type="PROSITE" id="PS50142">
    <property type="entry name" value="RNASE_3_2"/>
    <property type="match status" value="1"/>
</dbReference>
<sequence>MNHLNKLMERLGHQFNNLELLKIALTHRSSGADNNERLEFLGDSVLGFIIASELYQRRPQAREGDLSRMRASMVNGDELAQMSIKLGINEYLQLGVGEQKSGGKRRRSILADALEAIVGAIYIDAGLETCRRCVLNWYGERVDDLSKLSPKKDAKSLLQEWLQARRLPLPTYEVKITGEAHAQTFTVNCYVKGLPHKTEGVNTTRRRAEQIAAKRFLELLDDGKGDGITERDQ</sequence>
<comment type="function">
    <text evidence="1">Digests double-stranded RNA. Involved in the processing of primary rRNA transcript to yield the immediate precursors to the large and small rRNAs (23S and 16S). Processes some mRNAs, and tRNAs when they are encoded in the rRNA operon. Processes pre-crRNA and tracrRNA of type II CRISPR loci if present in the organism.</text>
</comment>
<comment type="catalytic activity">
    <reaction evidence="1">
        <text>Endonucleolytic cleavage to 5'-phosphomonoester.</text>
        <dbReference type="EC" id="3.1.26.3"/>
    </reaction>
</comment>
<comment type="cofactor">
    <cofactor evidence="1">
        <name>Mg(2+)</name>
        <dbReference type="ChEBI" id="CHEBI:18420"/>
    </cofactor>
</comment>
<comment type="subunit">
    <text evidence="1">Homodimer.</text>
</comment>
<comment type="subcellular location">
    <subcellularLocation>
        <location evidence="1">Cytoplasm</location>
    </subcellularLocation>
</comment>
<comment type="similarity">
    <text evidence="1">Belongs to the ribonuclease III family.</text>
</comment>